<keyword id="KW-0328">Glycosyltransferase</keyword>
<keyword id="KW-0479">Metal-binding</keyword>
<keyword id="KW-0671">Queuosine biosynthesis</keyword>
<keyword id="KW-0808">Transferase</keyword>
<keyword id="KW-0819">tRNA processing</keyword>
<keyword id="KW-0862">Zinc</keyword>
<reference key="1">
    <citation type="submission" date="2008-06" db="EMBL/GenBank/DDBJ databases">
        <title>Genome and proteome analysis of A. pleuropneumoniae serotype 7.</title>
        <authorList>
            <person name="Linke B."/>
            <person name="Buettner F."/>
            <person name="Martinez-Arias R."/>
            <person name="Goesmann A."/>
            <person name="Baltes N."/>
            <person name="Tegetmeyer H."/>
            <person name="Singh M."/>
            <person name="Gerlach G.F."/>
        </authorList>
    </citation>
    <scope>NUCLEOTIDE SEQUENCE [LARGE SCALE GENOMIC DNA]</scope>
    <source>
        <strain>AP76</strain>
    </source>
</reference>
<dbReference type="EC" id="2.4.2.29" evidence="1"/>
<dbReference type="EMBL" id="CP001091">
    <property type="protein sequence ID" value="ACE61417.1"/>
    <property type="molecule type" value="Genomic_DNA"/>
</dbReference>
<dbReference type="RefSeq" id="WP_005600941.1">
    <property type="nucleotide sequence ID" value="NC_010939.1"/>
</dbReference>
<dbReference type="SMR" id="B3GXF8"/>
<dbReference type="KEGG" id="apa:APP7_0765"/>
<dbReference type="HOGENOM" id="CLU_022060_0_1_6"/>
<dbReference type="UniPathway" id="UPA00392"/>
<dbReference type="Proteomes" id="UP000001226">
    <property type="component" value="Chromosome"/>
</dbReference>
<dbReference type="GO" id="GO:0005829">
    <property type="term" value="C:cytosol"/>
    <property type="evidence" value="ECO:0007669"/>
    <property type="project" value="TreeGrafter"/>
</dbReference>
<dbReference type="GO" id="GO:0046872">
    <property type="term" value="F:metal ion binding"/>
    <property type="evidence" value="ECO:0007669"/>
    <property type="project" value="UniProtKB-KW"/>
</dbReference>
<dbReference type="GO" id="GO:0008479">
    <property type="term" value="F:tRNA-guanosine(34) queuine transglycosylase activity"/>
    <property type="evidence" value="ECO:0007669"/>
    <property type="project" value="UniProtKB-UniRule"/>
</dbReference>
<dbReference type="GO" id="GO:0008616">
    <property type="term" value="P:queuosine biosynthetic process"/>
    <property type="evidence" value="ECO:0007669"/>
    <property type="project" value="UniProtKB-UniRule"/>
</dbReference>
<dbReference type="GO" id="GO:0002099">
    <property type="term" value="P:tRNA wobble guanine modification"/>
    <property type="evidence" value="ECO:0007669"/>
    <property type="project" value="TreeGrafter"/>
</dbReference>
<dbReference type="GO" id="GO:0101030">
    <property type="term" value="P:tRNA-guanine transglycosylation"/>
    <property type="evidence" value="ECO:0007669"/>
    <property type="project" value="InterPro"/>
</dbReference>
<dbReference type="FunFam" id="3.20.20.105:FF:000001">
    <property type="entry name" value="Queuine tRNA-ribosyltransferase"/>
    <property type="match status" value="1"/>
</dbReference>
<dbReference type="Gene3D" id="3.20.20.105">
    <property type="entry name" value="Queuine tRNA-ribosyltransferase-like"/>
    <property type="match status" value="1"/>
</dbReference>
<dbReference type="HAMAP" id="MF_00168">
    <property type="entry name" value="Q_tRNA_Tgt"/>
    <property type="match status" value="1"/>
</dbReference>
<dbReference type="InterPro" id="IPR050076">
    <property type="entry name" value="ArchSynthase1/Queuine_TRR"/>
</dbReference>
<dbReference type="InterPro" id="IPR004803">
    <property type="entry name" value="TGT"/>
</dbReference>
<dbReference type="InterPro" id="IPR036511">
    <property type="entry name" value="TGT-like_sf"/>
</dbReference>
<dbReference type="InterPro" id="IPR002616">
    <property type="entry name" value="tRNA_ribo_trans-like"/>
</dbReference>
<dbReference type="NCBIfam" id="TIGR00430">
    <property type="entry name" value="Q_tRNA_tgt"/>
    <property type="match status" value="1"/>
</dbReference>
<dbReference type="NCBIfam" id="TIGR00449">
    <property type="entry name" value="tgt_general"/>
    <property type="match status" value="1"/>
</dbReference>
<dbReference type="PANTHER" id="PTHR46499">
    <property type="entry name" value="QUEUINE TRNA-RIBOSYLTRANSFERASE"/>
    <property type="match status" value="1"/>
</dbReference>
<dbReference type="PANTHER" id="PTHR46499:SF1">
    <property type="entry name" value="QUEUINE TRNA-RIBOSYLTRANSFERASE"/>
    <property type="match status" value="1"/>
</dbReference>
<dbReference type="Pfam" id="PF01702">
    <property type="entry name" value="TGT"/>
    <property type="match status" value="1"/>
</dbReference>
<dbReference type="SUPFAM" id="SSF51713">
    <property type="entry name" value="tRNA-guanine transglycosylase"/>
    <property type="match status" value="1"/>
</dbReference>
<feature type="chain" id="PRO_1000097527" description="Queuine tRNA-ribosyltransferase">
    <location>
        <begin position="1"/>
        <end position="382"/>
    </location>
</feature>
<feature type="region of interest" description="RNA binding" evidence="1">
    <location>
        <begin position="249"/>
        <end position="255"/>
    </location>
</feature>
<feature type="region of interest" description="RNA binding; important for wobble base 34 recognition" evidence="1">
    <location>
        <begin position="273"/>
        <end position="277"/>
    </location>
</feature>
<feature type="active site" description="Proton acceptor" evidence="1">
    <location>
        <position position="93"/>
    </location>
</feature>
<feature type="active site" description="Nucleophile" evidence="1">
    <location>
        <position position="268"/>
    </location>
</feature>
<feature type="binding site" evidence="1">
    <location>
        <begin position="93"/>
        <end position="97"/>
    </location>
    <ligand>
        <name>substrate</name>
    </ligand>
</feature>
<feature type="binding site" evidence="1">
    <location>
        <position position="147"/>
    </location>
    <ligand>
        <name>substrate</name>
    </ligand>
</feature>
<feature type="binding site" evidence="1">
    <location>
        <position position="191"/>
    </location>
    <ligand>
        <name>substrate</name>
    </ligand>
</feature>
<feature type="binding site" evidence="1">
    <location>
        <position position="218"/>
    </location>
    <ligand>
        <name>substrate</name>
    </ligand>
</feature>
<feature type="binding site" evidence="1">
    <location>
        <position position="306"/>
    </location>
    <ligand>
        <name>Zn(2+)</name>
        <dbReference type="ChEBI" id="CHEBI:29105"/>
    </ligand>
</feature>
<feature type="binding site" evidence="1">
    <location>
        <position position="308"/>
    </location>
    <ligand>
        <name>Zn(2+)</name>
        <dbReference type="ChEBI" id="CHEBI:29105"/>
    </ligand>
</feature>
<feature type="binding site" evidence="1">
    <location>
        <position position="311"/>
    </location>
    <ligand>
        <name>Zn(2+)</name>
        <dbReference type="ChEBI" id="CHEBI:29105"/>
    </ligand>
</feature>
<feature type="binding site" evidence="1">
    <location>
        <position position="337"/>
    </location>
    <ligand>
        <name>Zn(2+)</name>
        <dbReference type="ChEBI" id="CHEBI:29105"/>
    </ligand>
</feature>
<name>TGT_ACTP7</name>
<accession>B3GXF8</accession>
<proteinExistence type="inferred from homology"/>
<comment type="function">
    <text evidence="1">Catalyzes the base-exchange of a guanine (G) residue with the queuine precursor 7-aminomethyl-7-deazaguanine (PreQ1) at position 34 (anticodon wobble position) in tRNAs with GU(N) anticodons (tRNA-Asp, -Asn, -His and -Tyr). Catalysis occurs through a double-displacement mechanism. The nucleophile active site attacks the C1' of nucleotide 34 to detach the guanine base from the RNA, forming a covalent enzyme-RNA intermediate. The proton acceptor active site deprotonates the incoming PreQ1, allowing a nucleophilic attack on the C1' of the ribose to form the product. After dissociation, two additional enzymatic reactions on the tRNA convert PreQ1 to queuine (Q), resulting in the hypermodified nucleoside queuosine (7-(((4,5-cis-dihydroxy-2-cyclopenten-1-yl)amino)methyl)-7-deazaguanosine).</text>
</comment>
<comment type="catalytic activity">
    <reaction evidence="1">
        <text>7-aminomethyl-7-carbaguanine + guanosine(34) in tRNA = 7-aminomethyl-7-carbaguanosine(34) in tRNA + guanine</text>
        <dbReference type="Rhea" id="RHEA:24104"/>
        <dbReference type="Rhea" id="RHEA-COMP:10341"/>
        <dbReference type="Rhea" id="RHEA-COMP:10342"/>
        <dbReference type="ChEBI" id="CHEBI:16235"/>
        <dbReference type="ChEBI" id="CHEBI:58703"/>
        <dbReference type="ChEBI" id="CHEBI:74269"/>
        <dbReference type="ChEBI" id="CHEBI:82833"/>
        <dbReference type="EC" id="2.4.2.29"/>
    </reaction>
</comment>
<comment type="cofactor">
    <cofactor evidence="1">
        <name>Zn(2+)</name>
        <dbReference type="ChEBI" id="CHEBI:29105"/>
    </cofactor>
    <text evidence="1">Binds 1 zinc ion per subunit.</text>
</comment>
<comment type="pathway">
    <text evidence="1">tRNA modification; tRNA-queuosine biosynthesis.</text>
</comment>
<comment type="subunit">
    <text evidence="1">Homodimer. Within each dimer, one monomer is responsible for RNA recognition and catalysis, while the other monomer binds to the replacement base PreQ1.</text>
</comment>
<comment type="similarity">
    <text evidence="1">Belongs to the queuine tRNA-ribosyltransferase family.</text>
</comment>
<organism>
    <name type="scientific">Actinobacillus pleuropneumoniae serotype 7 (strain AP76)</name>
    <dbReference type="NCBI Taxonomy" id="537457"/>
    <lineage>
        <taxon>Bacteria</taxon>
        <taxon>Pseudomonadati</taxon>
        <taxon>Pseudomonadota</taxon>
        <taxon>Gammaproteobacteria</taxon>
        <taxon>Pasteurellales</taxon>
        <taxon>Pasteurellaceae</taxon>
        <taxon>Actinobacillus</taxon>
    </lineage>
</organism>
<protein>
    <recommendedName>
        <fullName evidence="1">Queuine tRNA-ribosyltransferase</fullName>
        <ecNumber evidence="1">2.4.2.29</ecNumber>
    </recommendedName>
    <alternativeName>
        <fullName evidence="1">Guanine insertion enzyme</fullName>
    </alternativeName>
    <alternativeName>
        <fullName evidence="1">tRNA-guanine transglycosylase</fullName>
    </alternativeName>
</protein>
<sequence length="382" mass="43359">MKYELKTTSGNARRGRLTFSRPKGEYVVETPAFMPVGTYGTVKGMTPEEVAATGAQILLGNTFHLWLRPGQEVMKSHGDLHGFMQWHGPILTDSGGFQVFSLGKLRKIKEEGVTFQNPISGEKIFLSPEKSMEIQYDLGSDIVMIFDECTPYPATFDYAKNSMEMSLRWAKRSRDRFDELQNPRALFGIVQGGTYEELRKISVEGLVNIGFDGYAVGGLAVGEPKEEMHRILEFTTPLLPQDKPRYLMGVGKPEDLVEGVRRGIDMFDCVMPTRNARNGHLFVSNGIVKIRNAKYKTDTTPLDPECDCYTCKNYTKAYLYHLDKCGEILGARLNTIHNLRYYQRLMAQIRQAIEEDRFDDFVVEFYAKIGKEVPPLQSEVNK</sequence>
<evidence type="ECO:0000255" key="1">
    <source>
        <dbReference type="HAMAP-Rule" id="MF_00168"/>
    </source>
</evidence>
<gene>
    <name evidence="1" type="primary">tgt</name>
    <name type="ordered locus">APP7_0765</name>
</gene>